<feature type="signal peptide" evidence="10 13">
    <location>
        <begin position="1"/>
        <end position="33"/>
    </location>
</feature>
<feature type="chain" id="PRO_0000016267" description="Integrin alpha-7">
    <location>
        <begin position="34"/>
        <end position="1181"/>
    </location>
</feature>
<feature type="chain" id="PRO_0000016268" description="Integrin alpha-7 heavy chain" evidence="3">
    <location>
        <begin position="34"/>
        <end position="955"/>
    </location>
</feature>
<feature type="chain" id="PRO_0000398833" description="Integrin alpha-7 70 kDa form">
    <location>
        <begin position="648"/>
        <end position="1181"/>
    </location>
</feature>
<feature type="chain" id="PRO_0000016269" description="Integrin alpha-7 light chain" evidence="3">
    <location>
        <begin position="959"/>
        <end position="1181"/>
    </location>
</feature>
<feature type="topological domain" description="Extracellular" evidence="3">
    <location>
        <begin position="34"/>
        <end position="1082"/>
    </location>
</feature>
<feature type="transmembrane region" description="Helical" evidence="3">
    <location>
        <begin position="1083"/>
        <end position="1103"/>
    </location>
</feature>
<feature type="topological domain" description="Cytoplasmic" evidence="3">
    <location>
        <begin position="1104"/>
        <end position="1181"/>
    </location>
</feature>
<feature type="repeat" description="FG-GAP 1" evidence="4">
    <location>
        <begin position="35"/>
        <end position="103"/>
    </location>
</feature>
<feature type="repeat" description="FG-GAP 2" evidence="4">
    <location>
        <begin position="110"/>
        <end position="175"/>
    </location>
</feature>
<feature type="repeat" description="FG-GAP 3" evidence="4">
    <location>
        <begin position="185"/>
        <end position="238"/>
    </location>
</feature>
<feature type="repeat" description="FG-GAP 4" evidence="4">
    <location>
        <begin position="292"/>
        <end position="349"/>
    </location>
</feature>
<feature type="repeat" description="FG-GAP 5" evidence="4">
    <location>
        <begin position="350"/>
        <end position="411"/>
    </location>
</feature>
<feature type="repeat" description="FG-GAP 6" evidence="4">
    <location>
        <begin position="412"/>
        <end position="467"/>
    </location>
</feature>
<feature type="repeat" description="FG-GAP 7" evidence="4">
    <location>
        <begin position="471"/>
        <end position="530"/>
    </location>
</feature>
<feature type="repeat" description="1">
    <location>
        <begin position="1157"/>
        <end position="1160"/>
    </location>
</feature>
<feature type="repeat" description="2">
    <location>
        <begin position="1165"/>
        <end position="1168"/>
    </location>
</feature>
<feature type="repeat" description="3">
    <location>
        <begin position="1173"/>
        <end position="1176"/>
    </location>
</feature>
<feature type="region of interest" description="Disordered" evidence="5">
    <location>
        <begin position="950"/>
        <end position="978"/>
    </location>
</feature>
<feature type="region of interest" description="Disordered" evidence="5">
    <location>
        <begin position="1138"/>
        <end position="1181"/>
    </location>
</feature>
<feature type="region of interest" description="3 X 4 AA repeats of D-X-H-P">
    <location>
        <begin position="1157"/>
        <end position="1176"/>
    </location>
</feature>
<feature type="short sequence motif" description="GFFKR motif">
    <location>
        <begin position="1107"/>
        <end position="1111"/>
    </location>
</feature>
<feature type="compositionally biased region" description="Basic and acidic residues" evidence="5">
    <location>
        <begin position="950"/>
        <end position="961"/>
    </location>
</feature>
<feature type="binding site" evidence="2">
    <location>
        <position position="372"/>
    </location>
    <ligand>
        <name>Ca(2+)</name>
        <dbReference type="ChEBI" id="CHEBI:29108"/>
        <label>1</label>
    </ligand>
</feature>
<feature type="binding site" evidence="2">
    <location>
        <position position="374"/>
    </location>
    <ligand>
        <name>Ca(2+)</name>
        <dbReference type="ChEBI" id="CHEBI:29108"/>
        <label>1</label>
    </ligand>
</feature>
<feature type="binding site" evidence="2">
    <location>
        <position position="376"/>
    </location>
    <ligand>
        <name>Ca(2+)</name>
        <dbReference type="ChEBI" id="CHEBI:29108"/>
        <label>1</label>
    </ligand>
</feature>
<feature type="binding site" evidence="2">
    <location>
        <position position="380"/>
    </location>
    <ligand>
        <name>Ca(2+)</name>
        <dbReference type="ChEBI" id="CHEBI:29108"/>
        <label>1</label>
    </ligand>
</feature>
<feature type="binding site" evidence="2">
    <location>
        <position position="434"/>
    </location>
    <ligand>
        <name>Ca(2+)</name>
        <dbReference type="ChEBI" id="CHEBI:29108"/>
        <label>2</label>
    </ligand>
</feature>
<feature type="binding site" evidence="2">
    <location>
        <position position="436"/>
    </location>
    <ligand>
        <name>Ca(2+)</name>
        <dbReference type="ChEBI" id="CHEBI:29108"/>
        <label>2</label>
    </ligand>
</feature>
<feature type="binding site" evidence="2">
    <location>
        <position position="438"/>
    </location>
    <ligand>
        <name>Ca(2+)</name>
        <dbReference type="ChEBI" id="CHEBI:29108"/>
        <label>2</label>
    </ligand>
</feature>
<feature type="binding site" evidence="2">
    <location>
        <position position="442"/>
    </location>
    <ligand>
        <name>Ca(2+)</name>
        <dbReference type="ChEBI" id="CHEBI:29108"/>
        <label>2</label>
    </ligand>
</feature>
<feature type="binding site" evidence="2">
    <location>
        <position position="492"/>
    </location>
    <ligand>
        <name>Ca(2+)</name>
        <dbReference type="ChEBI" id="CHEBI:29108"/>
        <label>3</label>
    </ligand>
</feature>
<feature type="binding site" evidence="2">
    <location>
        <position position="494"/>
    </location>
    <ligand>
        <name>Ca(2+)</name>
        <dbReference type="ChEBI" id="CHEBI:29108"/>
        <label>3</label>
    </ligand>
</feature>
<feature type="binding site" evidence="2">
    <location>
        <position position="496"/>
    </location>
    <ligand>
        <name>Ca(2+)</name>
        <dbReference type="ChEBI" id="CHEBI:29108"/>
        <label>3</label>
    </ligand>
</feature>
<feature type="binding site" evidence="2">
    <location>
        <position position="498"/>
    </location>
    <ligand>
        <name>Ca(2+)</name>
        <dbReference type="ChEBI" id="CHEBI:29108"/>
        <label>3</label>
    </ligand>
</feature>
<feature type="binding site" evidence="2">
    <location>
        <position position="500"/>
    </location>
    <ligand>
        <name>Ca(2+)</name>
        <dbReference type="ChEBI" id="CHEBI:29108"/>
        <label>3</label>
    </ligand>
</feature>
<feature type="site" description="Cleavage; by urokinase">
    <location>
        <begin position="647"/>
        <end position="648"/>
    </location>
</feature>
<feature type="glycosylation site" description="N-linked (GlcNAc...) asparagine" evidence="3">
    <location>
        <position position="86"/>
    </location>
</feature>
<feature type="glycosylation site" description="N-linked (GlcNAc...) asparagine" evidence="3">
    <location>
        <position position="786"/>
    </location>
</feature>
<feature type="glycosylation site" description="N-linked (GlcNAc...) asparagine" evidence="3">
    <location>
        <position position="989"/>
    </location>
</feature>
<feature type="glycosylation site" description="N-linked (GlcNAc...) asparagine" evidence="15">
    <location>
        <position position="1025"/>
    </location>
</feature>
<feature type="glycosylation site" description="N-linked (GlcNAc...) asparagine" evidence="3">
    <location>
        <position position="1045"/>
    </location>
</feature>
<feature type="disulfide bond" evidence="1">
    <location>
        <begin position="94"/>
        <end position="103"/>
    </location>
</feature>
<feature type="disulfide bond" evidence="1">
    <location>
        <begin position="140"/>
        <end position="163"/>
    </location>
</feature>
<feature type="disulfide bond" evidence="1">
    <location>
        <begin position="184"/>
        <end position="197"/>
    </location>
</feature>
<feature type="disulfide bond" evidence="1">
    <location>
        <begin position="539"/>
        <end position="546"/>
    </location>
</feature>
<feature type="disulfide bond" evidence="1">
    <location>
        <begin position="552"/>
        <end position="615"/>
    </location>
</feature>
<feature type="disulfide bond" evidence="1">
    <location>
        <begin position="681"/>
        <end position="687"/>
    </location>
</feature>
<feature type="disulfide bond" evidence="1">
    <location>
        <begin position="781"/>
        <end position="792"/>
    </location>
</feature>
<feature type="disulfide bond" description="Interchain (between heavy and light chains)" evidence="1">
    <location>
        <begin position="939"/>
        <end position="994"/>
    </location>
</feature>
<feature type="disulfide bond" evidence="1">
    <location>
        <begin position="1001"/>
        <end position="1006"/>
    </location>
</feature>
<feature type="splice variant" id="VSP_040487" description="In isoform 2." evidence="23">
    <location>
        <begin position="1"/>
        <end position="97"/>
    </location>
</feature>
<feature type="splice variant" id="VSP_040488" description="In isoform 2." evidence="23">
    <original>LEETDCYRVDIDQGADMQKESKENQWLGVSVRSQGPGGKIV</original>
    <variation>MAPFATPMVQALTTTRIQRQAEGFQCWRECGTRRSPFEGKE</variation>
    <location>
        <begin position="98"/>
        <end position="138"/>
    </location>
</feature>
<feature type="splice variant" id="VSP_002727" description="In isoform Alpha-7X2B." evidence="24 26 27 28">
    <location>
        <begin position="224"/>
        <end position="267"/>
    </location>
</feature>
<feature type="splice variant" id="VSP_002728" description="In isoform Alpha-7X1B and isoform 2." evidence="22 23">
    <location>
        <begin position="268"/>
        <end position="307"/>
    </location>
</feature>
<feature type="splice variant" id="VSP_042364" description="In isoform Alpha-7X2DB." evidence="26">
    <location>
        <begin position="702"/>
        <end position="776"/>
    </location>
</feature>
<feature type="splice variant" id="VSP_002730" description="In isoform Alpha-7X1X2A." evidence="25">
    <original>MGFFKRAKHPEATVPQYHAVKIPREDRQQFKEEKTGTILRNNWGSPRREGPDAHPILAADGHPELGPDGHPGPGTA</original>
    <variation>CGFFHRSSQSSSFPTNYHRACLAVQPSAMEVGGPGTVGWDSSNGRSTPRPPCPSTMR</variation>
    <location>
        <begin position="1106"/>
        <end position="1181"/>
    </location>
</feature>
<feature type="sequence variant" id="VAR_067015" description="In dbSNP:rs17857367." evidence="11">
    <original>I</original>
    <variation>V</variation>
    <location>
        <position position="457"/>
    </location>
</feature>
<feature type="sequence variant" id="VAR_067016" description="In dbSNP:rs17854599." evidence="11">
    <original>L</original>
    <variation>M</variation>
    <location>
        <position position="506"/>
    </location>
</feature>
<feature type="sequence variant" id="VAR_067017" description="In dbSNP:rs17854598." evidence="11">
    <original>R</original>
    <variation>H</variation>
    <location>
        <position position="586"/>
    </location>
</feature>
<feature type="sequence variant" id="VAR_014759" description="In dbSNP:rs1800974." evidence="6 8 9 19 20 21">
    <original>R</original>
    <variation>H</variation>
    <location>
        <position position="695"/>
    </location>
</feature>
<feature type="sequence variant" id="VAR_067018" description="In dbSNP:rs17855684." evidence="11">
    <original>A</original>
    <variation>V</variation>
    <location>
        <position position="696"/>
    </location>
</feature>
<feature type="sequence conflict" description="In Ref. 2; AAC18968." evidence="29" ref="2">
    <original>A</original>
    <variation>T</variation>
    <location>
        <position position="873"/>
    </location>
</feature>
<feature type="sequence conflict" description="In Ref. 2; AAC18968." evidence="29" ref="2">
    <original>S</original>
    <variation>I</variation>
    <location>
        <position position="1005"/>
    </location>
</feature>
<feature type="sequence conflict" description="In Ref. 8; AAH50280." evidence="29" ref="8">
    <original>R</original>
    <variation>H</variation>
    <location>
        <position position="1013"/>
    </location>
</feature>
<proteinExistence type="evidence at protein level"/>
<sequence>MAGARSRDPWGASGICYLFGSLLVELLFSRAVAFNLDVMGALRKEGEPGSLFGFSVALHRQLQPRPQSWLLVGAPQALALPGQQANRTGGLFACPLSLEETDCYRVDIDQGADMQKESKENQWLGVSVRSQGPGGKIVTCAHRYEARQRVDQILETRDMIGRCFVLSQDLAIRDELDGGEWKFCEGRPQGHEQFGFCQQGTAAAFSPDSHYLLFGAPGTYNWKGTARVELCAQGSADLAHLDDGPYEAGGEKEQDPRLIPVPANSYFGLLFVTNIDSSDPDQLVYKTLDPADRLPGPAGDLALNSYLGFSIDSGKGLVRAEELSFVAGAPRANHKGAVVILRKDSASRLVPEVMLSGERLTSGFGYSLAVADLNSDGWPDLIVGAPYFFERQEELGGAVYVYLNQGGHWAGISPLRLCGSPDSMFGISLAVLGDLNQDGFPDIAVGAPFDGDGKVFIYHGSSLGVVAKPSQVLEGEAVGIKSFGYSLSGSLDMDGNQYPDLLVGSLADTAVLFRARPILHVSHEVSIAPRSIDLEQPNCAGGHSVCVDLRVCFSYIAVPSSYSPTVALDYVLDADTDRRLRGQVPRVTFLSRNLEEPKHQASGTVWLKHQHDRVCGDAMFQLQENVKDKLRAIVVTLSYSLQTPRLRRQAPGQGLPPVAPILNAHQPSTQRAEIHFLKQGCGEDKICQSNLQLVRARFCTRVSDTEFQPLPMDVDGTTALFALSGQPVIGLELMVTNLPSDPAQPQADGDDAHEAQLLVMLPDSLHYSGVRALDPAEKPLCLSNENASHVECELGNPMKRGAQVTFYLILSTSGISIETTELEVELLLATISEQELHPVSARARVFIELPLSIAGMAIPQQLFFSGVVRGERAMQSERDVGSKVKYEVTVSNQGQSLRTLGSAFLNIMWPHEIANGKWLLYPMQVELEGGQGPGQKGLCSPRPNILHLDVDSRDRRRRELEPPEQQEPGERQEPSMSWWPVSSAEKKKNITLDCARGTANCVVFSCPLYSFDRAAVLHVWGRLWNSTFLEEYSAVKSLEVIVRANITVKSSIKNLMLRDASTVIPVMVYLDPMAVVAEGVPWWVILLAVLAGLLVLALLVLLLWKMGFFKRAKHPEATVPQYHAVKIPREDRQQFKEEKTGTILRNNWGSPRREGPDAHPILAADGHPELGPDGHPGPGTA</sequence>
<protein>
    <recommendedName>
        <fullName>Integrin alpha-7</fullName>
    </recommendedName>
    <component>
        <recommendedName>
            <fullName>Integrin alpha-7 heavy chain</fullName>
        </recommendedName>
    </component>
    <component>
        <recommendedName>
            <fullName>Integrin alpha-7 light chain</fullName>
        </recommendedName>
    </component>
    <component>
        <recommendedName>
            <fullName>Integrin alpha-7 70 kDa form</fullName>
        </recommendedName>
    </component>
</protein>
<gene>
    <name type="primary">ITGA7</name>
    <name type="ORF">UNQ406/PRO768</name>
</gene>
<evidence type="ECO:0000250" key="1"/>
<evidence type="ECO:0000250" key="2">
    <source>
        <dbReference type="UniProtKB" id="P08648"/>
    </source>
</evidence>
<evidence type="ECO:0000255" key="3"/>
<evidence type="ECO:0000255" key="4">
    <source>
        <dbReference type="PROSITE-ProRule" id="PRU00803"/>
    </source>
</evidence>
<evidence type="ECO:0000256" key="5">
    <source>
        <dbReference type="SAM" id="MobiDB-lite"/>
    </source>
</evidence>
<evidence type="ECO:0000269" key="6">
    <source>
    </source>
</evidence>
<evidence type="ECO:0000269" key="7">
    <source>
    </source>
</evidence>
<evidence type="ECO:0000269" key="8">
    <source>
    </source>
</evidence>
<evidence type="ECO:0000269" key="9">
    <source>
    </source>
</evidence>
<evidence type="ECO:0000269" key="10">
    <source>
    </source>
</evidence>
<evidence type="ECO:0000269" key="11">
    <source>
    </source>
</evidence>
<evidence type="ECO:0000269" key="12">
    <source>
    </source>
</evidence>
<evidence type="ECO:0000269" key="13">
    <source>
    </source>
</evidence>
<evidence type="ECO:0000269" key="14">
    <source>
    </source>
</evidence>
<evidence type="ECO:0000269" key="15">
    <source>
    </source>
</evidence>
<evidence type="ECO:0000269" key="16">
    <source>
    </source>
</evidence>
<evidence type="ECO:0000269" key="17">
    <source>
    </source>
</evidence>
<evidence type="ECO:0000269" key="18">
    <source>
    </source>
</evidence>
<evidence type="ECO:0000269" key="19">
    <source>
    </source>
</evidence>
<evidence type="ECO:0000269" key="20">
    <source>
    </source>
</evidence>
<evidence type="ECO:0000269" key="21">
    <source ref="3"/>
</evidence>
<evidence type="ECO:0000303" key="22">
    <source>
    </source>
</evidence>
<evidence type="ECO:0000303" key="23">
    <source>
    </source>
</evidence>
<evidence type="ECO:0000303" key="24">
    <source>
    </source>
</evidence>
<evidence type="ECO:0000303" key="25">
    <source>
    </source>
</evidence>
<evidence type="ECO:0000303" key="26">
    <source>
    </source>
</evidence>
<evidence type="ECO:0000303" key="27">
    <source>
    </source>
</evidence>
<evidence type="ECO:0000303" key="28">
    <source ref="3"/>
</evidence>
<evidence type="ECO:0000305" key="29"/>
<dbReference type="EMBL" id="AF032108">
    <property type="protein sequence ID" value="AAC39708.1"/>
    <property type="molecule type" value="mRNA"/>
</dbReference>
<dbReference type="EMBL" id="AF052050">
    <property type="protein sequence ID" value="AAC18968.1"/>
    <property type="molecule type" value="mRNA"/>
</dbReference>
<dbReference type="EMBL" id="AF072132">
    <property type="protein sequence ID" value="AAC80458.1"/>
    <property type="molecule type" value="mRNA"/>
</dbReference>
<dbReference type="EMBL" id="AJ228836">
    <property type="protein sequence ID" value="CAB41534.1"/>
    <property type="molecule type" value="Genomic_DNA"/>
</dbReference>
<dbReference type="EMBL" id="AJ228837">
    <property type="protein sequence ID" value="CAB41534.1"/>
    <property type="status" value="JOINED"/>
    <property type="molecule type" value="Genomic_DNA"/>
</dbReference>
<dbReference type="EMBL" id="AJ228838">
    <property type="protein sequence ID" value="CAB41534.1"/>
    <property type="status" value="JOINED"/>
    <property type="molecule type" value="Genomic_DNA"/>
</dbReference>
<dbReference type="EMBL" id="AJ228839">
    <property type="protein sequence ID" value="CAB41534.1"/>
    <property type="status" value="JOINED"/>
    <property type="molecule type" value="Genomic_DNA"/>
</dbReference>
<dbReference type="EMBL" id="AJ228840">
    <property type="protein sequence ID" value="CAB41534.1"/>
    <property type="status" value="JOINED"/>
    <property type="molecule type" value="Genomic_DNA"/>
</dbReference>
<dbReference type="EMBL" id="AJ228842">
    <property type="protein sequence ID" value="CAB41534.1"/>
    <property type="status" value="JOINED"/>
    <property type="molecule type" value="Genomic_DNA"/>
</dbReference>
<dbReference type="EMBL" id="AJ228843">
    <property type="protein sequence ID" value="CAB41534.1"/>
    <property type="status" value="JOINED"/>
    <property type="molecule type" value="Genomic_DNA"/>
</dbReference>
<dbReference type="EMBL" id="AJ228844">
    <property type="protein sequence ID" value="CAB41534.1"/>
    <property type="status" value="JOINED"/>
    <property type="molecule type" value="Genomic_DNA"/>
</dbReference>
<dbReference type="EMBL" id="AJ228845">
    <property type="protein sequence ID" value="CAB41534.1"/>
    <property type="status" value="JOINED"/>
    <property type="molecule type" value="Genomic_DNA"/>
</dbReference>
<dbReference type="EMBL" id="AJ228846">
    <property type="protein sequence ID" value="CAB41534.1"/>
    <property type="status" value="JOINED"/>
    <property type="molecule type" value="Genomic_DNA"/>
</dbReference>
<dbReference type="EMBL" id="AJ228847">
    <property type="protein sequence ID" value="CAB41534.1"/>
    <property type="status" value="JOINED"/>
    <property type="molecule type" value="Genomic_DNA"/>
</dbReference>
<dbReference type="EMBL" id="AJ228848">
    <property type="protein sequence ID" value="CAB41534.1"/>
    <property type="status" value="JOINED"/>
    <property type="molecule type" value="Genomic_DNA"/>
</dbReference>
<dbReference type="EMBL" id="AJ228849">
    <property type="protein sequence ID" value="CAB41534.1"/>
    <property type="status" value="JOINED"/>
    <property type="molecule type" value="Genomic_DNA"/>
</dbReference>
<dbReference type="EMBL" id="AJ228850">
    <property type="protein sequence ID" value="CAB41534.1"/>
    <property type="status" value="JOINED"/>
    <property type="molecule type" value="Genomic_DNA"/>
</dbReference>
<dbReference type="EMBL" id="AJ228851">
    <property type="protein sequence ID" value="CAB41534.1"/>
    <property type="status" value="JOINED"/>
    <property type="molecule type" value="Genomic_DNA"/>
</dbReference>
<dbReference type="EMBL" id="AJ228852">
    <property type="protein sequence ID" value="CAB41534.1"/>
    <property type="status" value="JOINED"/>
    <property type="molecule type" value="Genomic_DNA"/>
</dbReference>
<dbReference type="EMBL" id="AJ228853">
    <property type="protein sequence ID" value="CAB41534.1"/>
    <property type="status" value="JOINED"/>
    <property type="molecule type" value="Genomic_DNA"/>
</dbReference>
<dbReference type="EMBL" id="AJ228854">
    <property type="protein sequence ID" value="CAB41534.1"/>
    <property type="status" value="JOINED"/>
    <property type="molecule type" value="Genomic_DNA"/>
</dbReference>
<dbReference type="EMBL" id="AJ228855">
    <property type="protein sequence ID" value="CAB41534.1"/>
    <property type="status" value="JOINED"/>
    <property type="molecule type" value="Genomic_DNA"/>
</dbReference>
<dbReference type="EMBL" id="AJ228856">
    <property type="protein sequence ID" value="CAB41534.1"/>
    <property type="status" value="JOINED"/>
    <property type="molecule type" value="Genomic_DNA"/>
</dbReference>
<dbReference type="EMBL" id="AJ228857">
    <property type="protein sequence ID" value="CAB41534.1"/>
    <property type="status" value="JOINED"/>
    <property type="molecule type" value="Genomic_DNA"/>
</dbReference>
<dbReference type="EMBL" id="AJ228858">
    <property type="protein sequence ID" value="CAB41534.1"/>
    <property type="status" value="JOINED"/>
    <property type="molecule type" value="Genomic_DNA"/>
</dbReference>
<dbReference type="EMBL" id="AJ228859">
    <property type="protein sequence ID" value="CAB41534.1"/>
    <property type="status" value="JOINED"/>
    <property type="molecule type" value="Genomic_DNA"/>
</dbReference>
<dbReference type="EMBL" id="AJ228860">
    <property type="protein sequence ID" value="CAB41534.1"/>
    <property type="status" value="JOINED"/>
    <property type="molecule type" value="Genomic_DNA"/>
</dbReference>
<dbReference type="EMBL" id="AJ228862">
    <property type="protein sequence ID" value="CAB41534.1"/>
    <property type="status" value="JOINED"/>
    <property type="molecule type" value="Genomic_DNA"/>
</dbReference>
<dbReference type="EMBL" id="AJ228836">
    <property type="protein sequence ID" value="CAB41535.1"/>
    <property type="molecule type" value="Genomic_DNA"/>
</dbReference>
<dbReference type="EMBL" id="AJ228837">
    <property type="protein sequence ID" value="CAB41535.1"/>
    <property type="status" value="JOINED"/>
    <property type="molecule type" value="Genomic_DNA"/>
</dbReference>
<dbReference type="EMBL" id="AJ228838">
    <property type="protein sequence ID" value="CAB41535.1"/>
    <property type="status" value="JOINED"/>
    <property type="molecule type" value="Genomic_DNA"/>
</dbReference>
<dbReference type="EMBL" id="AJ228839">
    <property type="protein sequence ID" value="CAB41535.1"/>
    <property type="status" value="JOINED"/>
    <property type="molecule type" value="Genomic_DNA"/>
</dbReference>
<dbReference type="EMBL" id="AJ228841">
    <property type="protein sequence ID" value="CAB41535.1"/>
    <property type="status" value="JOINED"/>
    <property type="molecule type" value="Genomic_DNA"/>
</dbReference>
<dbReference type="EMBL" id="AJ228842">
    <property type="protein sequence ID" value="CAB41535.1"/>
    <property type="status" value="JOINED"/>
    <property type="molecule type" value="Genomic_DNA"/>
</dbReference>
<dbReference type="EMBL" id="AJ228843">
    <property type="protein sequence ID" value="CAB41535.1"/>
    <property type="status" value="JOINED"/>
    <property type="molecule type" value="Genomic_DNA"/>
</dbReference>
<dbReference type="EMBL" id="AJ228844">
    <property type="protein sequence ID" value="CAB41535.1"/>
    <property type="status" value="JOINED"/>
    <property type="molecule type" value="Genomic_DNA"/>
</dbReference>
<dbReference type="EMBL" id="AJ228845">
    <property type="protein sequence ID" value="CAB41535.1"/>
    <property type="status" value="JOINED"/>
    <property type="molecule type" value="Genomic_DNA"/>
</dbReference>
<dbReference type="EMBL" id="AJ228846">
    <property type="protein sequence ID" value="CAB41535.1"/>
    <property type="status" value="JOINED"/>
    <property type="molecule type" value="Genomic_DNA"/>
</dbReference>
<dbReference type="EMBL" id="AJ228847">
    <property type="protein sequence ID" value="CAB41535.1"/>
    <property type="status" value="JOINED"/>
    <property type="molecule type" value="Genomic_DNA"/>
</dbReference>
<dbReference type="EMBL" id="AJ228848">
    <property type="protein sequence ID" value="CAB41535.1"/>
    <property type="status" value="JOINED"/>
    <property type="molecule type" value="Genomic_DNA"/>
</dbReference>
<dbReference type="EMBL" id="AJ228849">
    <property type="protein sequence ID" value="CAB41535.1"/>
    <property type="status" value="JOINED"/>
    <property type="molecule type" value="Genomic_DNA"/>
</dbReference>
<dbReference type="EMBL" id="AJ228850">
    <property type="protein sequence ID" value="CAB41535.1"/>
    <property type="status" value="JOINED"/>
    <property type="molecule type" value="Genomic_DNA"/>
</dbReference>
<dbReference type="EMBL" id="AJ228851">
    <property type="protein sequence ID" value="CAB41535.1"/>
    <property type="status" value="JOINED"/>
    <property type="molecule type" value="Genomic_DNA"/>
</dbReference>
<dbReference type="EMBL" id="AJ228852">
    <property type="protein sequence ID" value="CAB41535.1"/>
    <property type="status" value="JOINED"/>
    <property type="molecule type" value="Genomic_DNA"/>
</dbReference>
<dbReference type="EMBL" id="AJ228853">
    <property type="protein sequence ID" value="CAB41535.1"/>
    <property type="status" value="JOINED"/>
    <property type="molecule type" value="Genomic_DNA"/>
</dbReference>
<dbReference type="EMBL" id="AJ228854">
    <property type="protein sequence ID" value="CAB41535.1"/>
    <property type="status" value="JOINED"/>
    <property type="molecule type" value="Genomic_DNA"/>
</dbReference>
<dbReference type="EMBL" id="AJ228855">
    <property type="protein sequence ID" value="CAB41535.1"/>
    <property type="status" value="JOINED"/>
    <property type="molecule type" value="Genomic_DNA"/>
</dbReference>
<dbReference type="EMBL" id="AJ228856">
    <property type="protein sequence ID" value="CAB41535.1"/>
    <property type="status" value="JOINED"/>
    <property type="molecule type" value="Genomic_DNA"/>
</dbReference>
<dbReference type="EMBL" id="AJ228857">
    <property type="protein sequence ID" value="CAB41535.1"/>
    <property type="status" value="JOINED"/>
    <property type="molecule type" value="Genomic_DNA"/>
</dbReference>
<dbReference type="EMBL" id="AJ228858">
    <property type="protein sequence ID" value="CAB41535.1"/>
    <property type="status" value="JOINED"/>
    <property type="molecule type" value="Genomic_DNA"/>
</dbReference>
<dbReference type="EMBL" id="AJ228859">
    <property type="protein sequence ID" value="CAB41535.1"/>
    <property type="status" value="JOINED"/>
    <property type="molecule type" value="Genomic_DNA"/>
</dbReference>
<dbReference type="EMBL" id="AJ228860">
    <property type="protein sequence ID" value="CAB41535.1"/>
    <property type="status" value="JOINED"/>
    <property type="molecule type" value="Genomic_DNA"/>
</dbReference>
<dbReference type="EMBL" id="AJ228862">
    <property type="protein sequence ID" value="CAB41535.1"/>
    <property type="status" value="JOINED"/>
    <property type="molecule type" value="Genomic_DNA"/>
</dbReference>
<dbReference type="EMBL" id="AY358882">
    <property type="protein sequence ID" value="AAQ89241.1"/>
    <property type="molecule type" value="mRNA"/>
</dbReference>
<dbReference type="EMBL" id="AK304864">
    <property type="protein sequence ID" value="BAG65602.1"/>
    <property type="molecule type" value="mRNA"/>
</dbReference>
<dbReference type="EMBL" id="AC009779">
    <property type="status" value="NOT_ANNOTATED_CDS"/>
    <property type="molecule type" value="Genomic_DNA"/>
</dbReference>
<dbReference type="EMBL" id="BC050280">
    <property type="protein sequence ID" value="AAH50280.1"/>
    <property type="molecule type" value="mRNA"/>
</dbReference>
<dbReference type="EMBL" id="X74295">
    <property type="protein sequence ID" value="CAA52348.1"/>
    <property type="molecule type" value="mRNA"/>
</dbReference>
<dbReference type="EMBL" id="AF034833">
    <property type="protein sequence ID" value="AAB87696.1"/>
    <property type="molecule type" value="mRNA"/>
</dbReference>
<dbReference type="CCDS" id="CCDS44914.1">
    <molecule id="Q13683-13"/>
</dbReference>
<dbReference type="CCDS" id="CCDS55832.1">
    <molecule id="Q13683-3"/>
</dbReference>
<dbReference type="CCDS" id="CCDS8888.1">
    <molecule id="Q13683-7"/>
</dbReference>
<dbReference type="CCDS" id="CCDS91704.1">
    <molecule id="Q13683-1"/>
</dbReference>
<dbReference type="PIR" id="JC5950">
    <property type="entry name" value="JC5950"/>
</dbReference>
<dbReference type="RefSeq" id="NP_001138468.1">
    <molecule id="Q13683-3"/>
    <property type="nucleotide sequence ID" value="NM_001144996.2"/>
</dbReference>
<dbReference type="RefSeq" id="NP_001138469.1">
    <molecule id="Q13683-13"/>
    <property type="nucleotide sequence ID" value="NM_001144997.2"/>
</dbReference>
<dbReference type="RefSeq" id="NP_001397906.1">
    <molecule id="Q13683-1"/>
    <property type="nucleotide sequence ID" value="NM_001410977.1"/>
</dbReference>
<dbReference type="RefSeq" id="NP_002197.2">
    <molecule id="Q13683-7"/>
    <property type="nucleotide sequence ID" value="NM_002206.3"/>
</dbReference>
<dbReference type="RefSeq" id="XP_005268896.1">
    <property type="nucleotide sequence ID" value="XM_005268839.1"/>
</dbReference>
<dbReference type="RefSeq" id="XP_005268898.1">
    <molecule id="Q13683-10"/>
    <property type="nucleotide sequence ID" value="XM_005268841.3"/>
</dbReference>
<dbReference type="SMR" id="Q13683"/>
<dbReference type="BioGRID" id="109885">
    <property type="interactions" value="123"/>
</dbReference>
<dbReference type="ComplexPortal" id="CPX-1804">
    <property type="entry name" value="Integrin alpha7-beta1 complex"/>
</dbReference>
<dbReference type="CORUM" id="Q13683"/>
<dbReference type="DIP" id="DIP-5981N"/>
<dbReference type="FunCoup" id="Q13683">
    <property type="interactions" value="1194"/>
</dbReference>
<dbReference type="IntAct" id="Q13683">
    <property type="interactions" value="90"/>
</dbReference>
<dbReference type="MINT" id="Q13683"/>
<dbReference type="STRING" id="9606.ENSP00000452120"/>
<dbReference type="TCDB" id="8.A.54.1.5">
    <property type="family name" value="the integrin (integrin) family"/>
</dbReference>
<dbReference type="GlyCosmos" id="Q13683">
    <property type="glycosylation" value="5 sites, No reported glycans"/>
</dbReference>
<dbReference type="GlyGen" id="Q13683">
    <property type="glycosylation" value="5 sites, 8 N-linked glycans (4 sites)"/>
</dbReference>
<dbReference type="iPTMnet" id="Q13683"/>
<dbReference type="PhosphoSitePlus" id="Q13683"/>
<dbReference type="SwissPalm" id="Q13683"/>
<dbReference type="BioMuta" id="ITGA7"/>
<dbReference type="DMDM" id="308153592"/>
<dbReference type="jPOST" id="Q13683"/>
<dbReference type="MassIVE" id="Q13683"/>
<dbReference type="PaxDb" id="9606-ENSP00000452120"/>
<dbReference type="PeptideAtlas" id="Q13683"/>
<dbReference type="ProteomicsDB" id="59654">
    <molecule id="Q13683-1"/>
</dbReference>
<dbReference type="ProteomicsDB" id="59655">
    <molecule id="Q13683-10"/>
</dbReference>
<dbReference type="ProteomicsDB" id="59656">
    <molecule id="Q13683-13"/>
</dbReference>
<dbReference type="ProteomicsDB" id="59657">
    <molecule id="Q13683-3"/>
</dbReference>
<dbReference type="ProteomicsDB" id="59658">
    <molecule id="Q13683-7"/>
</dbReference>
<dbReference type="ProteomicsDB" id="59659">
    <molecule id="Q13683-9"/>
</dbReference>
<dbReference type="ABCD" id="Q13683">
    <property type="antibodies" value="49 sequenced antibodies"/>
</dbReference>
<dbReference type="Antibodypedia" id="1495">
    <property type="antibodies" value="251 antibodies from 30 providers"/>
</dbReference>
<dbReference type="DNASU" id="3679"/>
<dbReference type="Ensembl" id="ENST00000257879.11">
    <molecule id="Q13683-7"/>
    <property type="protein sequence ID" value="ENSP00000257879.7"/>
    <property type="gene ID" value="ENSG00000135424.19"/>
</dbReference>
<dbReference type="Ensembl" id="ENST00000452168.6">
    <molecule id="Q13683-13"/>
    <property type="protein sequence ID" value="ENSP00000393844.2"/>
    <property type="gene ID" value="ENSG00000135424.19"/>
</dbReference>
<dbReference type="Ensembl" id="ENST00000553804.6">
    <molecule id="Q13683-3"/>
    <property type="protein sequence ID" value="ENSP00000452120.1"/>
    <property type="gene ID" value="ENSG00000135424.19"/>
</dbReference>
<dbReference type="Ensembl" id="ENST00000555728.5">
    <molecule id="Q13683-1"/>
    <property type="protein sequence ID" value="ENSP00000452387.1"/>
    <property type="gene ID" value="ENSG00000135424.19"/>
</dbReference>
<dbReference type="GeneID" id="3679"/>
<dbReference type="KEGG" id="hsa:3679"/>
<dbReference type="MANE-Select" id="ENST00000257879.11">
    <molecule id="Q13683-7"/>
    <property type="protein sequence ID" value="ENSP00000257879.7"/>
    <property type="RefSeq nucleotide sequence ID" value="NM_002206.3"/>
    <property type="RefSeq protein sequence ID" value="NP_002197.2"/>
</dbReference>
<dbReference type="UCSC" id="uc001shg.4">
    <molecule id="Q13683-1"/>
    <property type="organism name" value="human"/>
</dbReference>
<dbReference type="AGR" id="HGNC:6143"/>
<dbReference type="CTD" id="3679"/>
<dbReference type="DisGeNET" id="3679"/>
<dbReference type="GeneCards" id="ITGA7"/>
<dbReference type="HGNC" id="HGNC:6143">
    <property type="gene designation" value="ITGA7"/>
</dbReference>
<dbReference type="HPA" id="ENSG00000135424">
    <property type="expression patterns" value="Tissue enhanced (skeletal)"/>
</dbReference>
<dbReference type="MalaCards" id="ITGA7"/>
<dbReference type="MIM" id="600536">
    <property type="type" value="gene"/>
</dbReference>
<dbReference type="MIM" id="613204">
    <property type="type" value="phenotype"/>
</dbReference>
<dbReference type="neXtProt" id="NX_Q13683"/>
<dbReference type="OpenTargets" id="ENSG00000135424"/>
<dbReference type="Orphanet" id="2020">
    <property type="disease" value="Congenital fiber-type disproportion myopathy"/>
</dbReference>
<dbReference type="Orphanet" id="34520">
    <property type="disease" value="Congenital muscular dystrophy with integrin alpha-7 deficiency"/>
</dbReference>
<dbReference type="PharmGKB" id="PA29943"/>
<dbReference type="VEuPathDB" id="HostDB:ENSG00000135424"/>
<dbReference type="eggNOG" id="KOG3637">
    <property type="taxonomic scope" value="Eukaryota"/>
</dbReference>
<dbReference type="GeneTree" id="ENSGT00940000159891"/>
<dbReference type="InParanoid" id="Q13683"/>
<dbReference type="OMA" id="HTYELIN"/>
<dbReference type="OrthoDB" id="5317514at2759"/>
<dbReference type="PAN-GO" id="Q13683">
    <property type="GO annotations" value="8 GO annotations based on evolutionary models"/>
</dbReference>
<dbReference type="PhylomeDB" id="Q13683"/>
<dbReference type="TreeFam" id="TF105391"/>
<dbReference type="PathwayCommons" id="Q13683"/>
<dbReference type="Reactome" id="R-HSA-216083">
    <property type="pathway name" value="Integrin cell surface interactions"/>
</dbReference>
<dbReference type="Reactome" id="R-HSA-3000157">
    <property type="pathway name" value="Laminin interactions"/>
</dbReference>
<dbReference type="Reactome" id="R-HSA-3000178">
    <property type="pathway name" value="ECM proteoglycans"/>
</dbReference>
<dbReference type="SignaLink" id="Q13683"/>
<dbReference type="SIGNOR" id="Q13683"/>
<dbReference type="BioGRID-ORCS" id="3679">
    <property type="hits" value="14 hits in 1147 CRISPR screens"/>
</dbReference>
<dbReference type="ChiTaRS" id="ITGA7">
    <property type="organism name" value="human"/>
</dbReference>
<dbReference type="GeneWiki" id="ITGA7"/>
<dbReference type="GenomeRNAi" id="3679"/>
<dbReference type="Pharos" id="Q13683">
    <property type="development level" value="Tbio"/>
</dbReference>
<dbReference type="PRO" id="PR:Q13683"/>
<dbReference type="Proteomes" id="UP000005640">
    <property type="component" value="Chromosome 12"/>
</dbReference>
<dbReference type="RNAct" id="Q13683">
    <property type="molecule type" value="protein"/>
</dbReference>
<dbReference type="Bgee" id="ENSG00000135424">
    <property type="expression patterns" value="Expressed in apex of heart and 185 other cell types or tissues"/>
</dbReference>
<dbReference type="ExpressionAtlas" id="Q13683">
    <property type="expression patterns" value="baseline and differential"/>
</dbReference>
<dbReference type="GO" id="GO:0009986">
    <property type="term" value="C:cell surface"/>
    <property type="evidence" value="ECO:0000305"/>
    <property type="project" value="UniProtKB"/>
</dbReference>
<dbReference type="GO" id="GO:0009897">
    <property type="term" value="C:external side of plasma membrane"/>
    <property type="evidence" value="ECO:0000318"/>
    <property type="project" value="GO_Central"/>
</dbReference>
<dbReference type="GO" id="GO:0008305">
    <property type="term" value="C:integrin complex"/>
    <property type="evidence" value="ECO:0000318"/>
    <property type="project" value="GO_Central"/>
</dbReference>
<dbReference type="GO" id="GO:0005886">
    <property type="term" value="C:plasma membrane"/>
    <property type="evidence" value="ECO:0000304"/>
    <property type="project" value="Reactome"/>
</dbReference>
<dbReference type="GO" id="GO:0005178">
    <property type="term" value="F:integrin binding"/>
    <property type="evidence" value="ECO:0000318"/>
    <property type="project" value="GO_Central"/>
</dbReference>
<dbReference type="GO" id="GO:0046872">
    <property type="term" value="F:metal ion binding"/>
    <property type="evidence" value="ECO:0007669"/>
    <property type="project" value="UniProtKB-KW"/>
</dbReference>
<dbReference type="GO" id="GO:0033627">
    <property type="term" value="P:cell adhesion mediated by integrin"/>
    <property type="evidence" value="ECO:0000318"/>
    <property type="project" value="GO_Central"/>
</dbReference>
<dbReference type="GO" id="GO:0098609">
    <property type="term" value="P:cell-cell adhesion"/>
    <property type="evidence" value="ECO:0000318"/>
    <property type="project" value="GO_Central"/>
</dbReference>
<dbReference type="GO" id="GO:0007160">
    <property type="term" value="P:cell-matrix adhesion"/>
    <property type="evidence" value="ECO:0000304"/>
    <property type="project" value="ProtInc"/>
</dbReference>
<dbReference type="GO" id="GO:0035987">
    <property type="term" value="P:endodermal cell differentiation"/>
    <property type="evidence" value="ECO:0000270"/>
    <property type="project" value="UniProtKB"/>
</dbReference>
<dbReference type="GO" id="GO:0034113">
    <property type="term" value="P:heterotypic cell-cell adhesion"/>
    <property type="evidence" value="ECO:0000315"/>
    <property type="project" value="UniProtKB"/>
</dbReference>
<dbReference type="GO" id="GO:0007229">
    <property type="term" value="P:integrin-mediated signaling pathway"/>
    <property type="evidence" value="ECO:0000318"/>
    <property type="project" value="GO_Central"/>
</dbReference>
<dbReference type="GO" id="GO:0050900">
    <property type="term" value="P:leukocyte migration"/>
    <property type="evidence" value="ECO:0000318"/>
    <property type="project" value="GO_Central"/>
</dbReference>
<dbReference type="GO" id="GO:0007517">
    <property type="term" value="P:muscle organ development"/>
    <property type="evidence" value="ECO:0000304"/>
    <property type="project" value="ProtInc"/>
</dbReference>
<dbReference type="GO" id="GO:0008360">
    <property type="term" value="P:regulation of cell shape"/>
    <property type="evidence" value="ECO:0007669"/>
    <property type="project" value="UniProtKB-KW"/>
</dbReference>
<dbReference type="FunFam" id="2.130.10.130:FF:000002">
    <property type="entry name" value="integrin alpha-6 isoform X2"/>
    <property type="match status" value="2"/>
</dbReference>
<dbReference type="FunFam" id="2.60.40.1510:FF:000002">
    <property type="entry name" value="integrin alpha-6 isoform X2"/>
    <property type="match status" value="1"/>
</dbReference>
<dbReference type="FunFam" id="2.60.40.1460:FF:000003">
    <property type="entry name" value="Integrin subunit alpha 7"/>
    <property type="match status" value="1"/>
</dbReference>
<dbReference type="FunFam" id="2.60.40.1530:FF:000001">
    <property type="entry name" value="Integrin subunit alpha 7"/>
    <property type="match status" value="1"/>
</dbReference>
<dbReference type="FunFam" id="1.20.5.930:FF:000001">
    <property type="entry name" value="Integrin subunit alpha V"/>
    <property type="match status" value="1"/>
</dbReference>
<dbReference type="Gene3D" id="1.20.5.930">
    <property type="entry name" value="Bicelle-embedded integrin alpha(iib) transmembrane segment"/>
    <property type="match status" value="1"/>
</dbReference>
<dbReference type="Gene3D" id="2.130.10.130">
    <property type="entry name" value="Integrin alpha, N-terminal"/>
    <property type="match status" value="1"/>
</dbReference>
<dbReference type="Gene3D" id="2.60.40.1460">
    <property type="entry name" value="Integrin domains. Chain A, domain 2"/>
    <property type="match status" value="1"/>
</dbReference>
<dbReference type="Gene3D" id="2.60.40.1510">
    <property type="entry name" value="ntegrin, alpha v. Chain A, domain 3"/>
    <property type="match status" value="1"/>
</dbReference>
<dbReference type="Gene3D" id="2.60.40.1530">
    <property type="entry name" value="ntegrin, alpha v. Chain A, domain 4"/>
    <property type="match status" value="1"/>
</dbReference>
<dbReference type="InterPro" id="IPR013517">
    <property type="entry name" value="FG-GAP"/>
</dbReference>
<dbReference type="InterPro" id="IPR013519">
    <property type="entry name" value="Int_alpha_beta-p"/>
</dbReference>
<dbReference type="InterPro" id="IPR000413">
    <property type="entry name" value="Integrin_alpha"/>
</dbReference>
<dbReference type="InterPro" id="IPR018184">
    <property type="entry name" value="Integrin_alpha_C_CS"/>
</dbReference>
<dbReference type="InterPro" id="IPR013649">
    <property type="entry name" value="Integrin_alpha_Ig-like_1"/>
</dbReference>
<dbReference type="InterPro" id="IPR048285">
    <property type="entry name" value="Integrin_alpha_Ig-like_2"/>
</dbReference>
<dbReference type="InterPro" id="IPR048286">
    <property type="entry name" value="Integrin_alpha_Ig-like_3"/>
</dbReference>
<dbReference type="InterPro" id="IPR028994">
    <property type="entry name" value="Integrin_alpha_N"/>
</dbReference>
<dbReference type="InterPro" id="IPR032695">
    <property type="entry name" value="Integrin_dom_sf"/>
</dbReference>
<dbReference type="PANTHER" id="PTHR23220">
    <property type="entry name" value="INTEGRIN ALPHA"/>
    <property type="match status" value="1"/>
</dbReference>
<dbReference type="PANTHER" id="PTHR23220:SF90">
    <property type="entry name" value="INTEGRIN ALPHA-7"/>
    <property type="match status" value="1"/>
</dbReference>
<dbReference type="Pfam" id="PF01839">
    <property type="entry name" value="FG-GAP"/>
    <property type="match status" value="2"/>
</dbReference>
<dbReference type="Pfam" id="PF08441">
    <property type="entry name" value="Integrin_A_Ig_1"/>
    <property type="match status" value="1"/>
</dbReference>
<dbReference type="Pfam" id="PF20805">
    <property type="entry name" value="Integrin_A_Ig_2"/>
    <property type="match status" value="1"/>
</dbReference>
<dbReference type="Pfam" id="PF20806">
    <property type="entry name" value="Integrin_A_Ig_3"/>
    <property type="match status" value="1"/>
</dbReference>
<dbReference type="PRINTS" id="PR01185">
    <property type="entry name" value="INTEGRINA"/>
</dbReference>
<dbReference type="SMART" id="SM00191">
    <property type="entry name" value="Int_alpha"/>
    <property type="match status" value="5"/>
</dbReference>
<dbReference type="SUPFAM" id="SSF69318">
    <property type="entry name" value="Integrin alpha N-terminal domain"/>
    <property type="match status" value="1"/>
</dbReference>
<dbReference type="SUPFAM" id="SSF69179">
    <property type="entry name" value="Integrin domains"/>
    <property type="match status" value="3"/>
</dbReference>
<dbReference type="PROSITE" id="PS51470">
    <property type="entry name" value="FG_GAP"/>
    <property type="match status" value="7"/>
</dbReference>
<dbReference type="PROSITE" id="PS00242">
    <property type="entry name" value="INTEGRIN_ALPHA"/>
    <property type="match status" value="1"/>
</dbReference>
<keyword id="KW-0013">ADP-ribosylation</keyword>
<keyword id="KW-0025">Alternative splicing</keyword>
<keyword id="KW-0106">Calcium</keyword>
<keyword id="KW-0130">Cell adhesion</keyword>
<keyword id="KW-0133">Cell shape</keyword>
<keyword id="KW-0165">Cleavage on pair of basic residues</keyword>
<keyword id="KW-0912">Congenital muscular dystrophy</keyword>
<keyword id="KW-0903">Direct protein sequencing</keyword>
<keyword id="KW-1015">Disulfide bond</keyword>
<keyword id="KW-0325">Glycoprotein</keyword>
<keyword id="KW-0401">Integrin</keyword>
<keyword id="KW-0472">Membrane</keyword>
<keyword id="KW-0479">Metal-binding</keyword>
<keyword id="KW-1267">Proteomics identification</keyword>
<keyword id="KW-0675">Receptor</keyword>
<keyword id="KW-1185">Reference proteome</keyword>
<keyword id="KW-0677">Repeat</keyword>
<keyword id="KW-0732">Signal</keyword>
<keyword id="KW-0812">Transmembrane</keyword>
<keyword id="KW-1133">Transmembrane helix</keyword>
<organism>
    <name type="scientific">Homo sapiens</name>
    <name type="common">Human</name>
    <dbReference type="NCBI Taxonomy" id="9606"/>
    <lineage>
        <taxon>Eukaryota</taxon>
        <taxon>Metazoa</taxon>
        <taxon>Chordata</taxon>
        <taxon>Craniata</taxon>
        <taxon>Vertebrata</taxon>
        <taxon>Euteleostomi</taxon>
        <taxon>Mammalia</taxon>
        <taxon>Eutheria</taxon>
        <taxon>Euarchontoglires</taxon>
        <taxon>Primates</taxon>
        <taxon>Haplorrhini</taxon>
        <taxon>Catarrhini</taxon>
        <taxon>Hominidae</taxon>
        <taxon>Homo</taxon>
    </lineage>
</organism>
<reference key="1">
    <citation type="journal article" date="1998" name="Biochem. Biophys. Res. Commun.">
        <title>A novel extracellular domain variant of the human integrin alpha 7 subunit generated by alternative intron splicing.</title>
        <authorList>
            <person name="Leung E."/>
            <person name="Lim S.P."/>
            <person name="Berg R."/>
            <person name="Yang Y."/>
            <person name="Ni J."/>
            <person name="Wang S.-X."/>
            <person name="Krissansen G.W."/>
        </authorList>
    </citation>
    <scope>NUCLEOTIDE SEQUENCE [MRNA] (ISOFORMS ALPHA-7X2B AND ALPHA-7X2DB)</scope>
    <scope>VARIANT HIS-695</scope>
    <source>
        <tissue>Fetal heart</tissue>
        <tissue>Osteoblast</tissue>
    </source>
</reference>
<reference key="2">
    <citation type="journal article" date="1998" name="Nat. Genet.">
        <title>Mutations in the integrin alpha7 gene cause congenital myopathy.</title>
        <authorList>
            <person name="Hayashi Y.K."/>
            <person name="Chou F.-L."/>
            <person name="Engvall E."/>
            <person name="Ogawa M."/>
            <person name="Matsuda C."/>
            <person name="Hirabayashi S."/>
            <person name="Yokochi K."/>
            <person name="Ziober B.L."/>
            <person name="Kramer R.H."/>
            <person name="Kaufman S.J."/>
            <person name="Ozawa E."/>
            <person name="Goto Y."/>
            <person name="Nonaka I."/>
            <person name="Tsukahara T."/>
            <person name="Wang J.Z."/>
            <person name="Hoffman E.P."/>
            <person name="Arahata K."/>
        </authorList>
    </citation>
    <scope>NUCLEOTIDE SEQUENCE [MRNA] (ISOFORM ALPHA-7X2B)</scope>
    <scope>INVOLVEMENT IN MDCI</scope>
    <scope>VARIANT HIS-695</scope>
</reference>
<reference key="3">
    <citation type="submission" date="1998-06" db="EMBL/GenBank/DDBJ databases">
        <title>Cloning of human integrin alpha-7 cDNA.</title>
        <authorList>
            <person name="Vizirianakis I.S."/>
            <person name="Ziober B.L."/>
            <person name="Kramer R.H."/>
        </authorList>
    </citation>
    <scope>NUCLEOTIDE SEQUENCE [MRNA] (ISOFORM ALPHA-7X2B)</scope>
    <scope>VARIANT HIS-695</scope>
</reference>
<reference key="4">
    <citation type="journal article" date="1999" name="Biochem. Biophys. Res. Commun.">
        <title>Structure, genetic localization, and identification of the cardiac and skeletal muscle transcripts of the human integrin alpha7 gene (ITGA7).</title>
        <authorList>
            <person name="Vignier N."/>
            <person name="Moghadaszadeh B."/>
            <person name="Gary F."/>
            <person name="Beckmann J."/>
            <person name="Mayer U."/>
            <person name="Guicheney P."/>
        </authorList>
    </citation>
    <scope>NUCLEOTIDE SEQUENCE [GENOMIC DNA]</scope>
    <scope>ALTERNATIVE SPLICING</scope>
    <scope>VARIANT HIS-695</scope>
    <source>
        <tissue>Skeletal muscle</tissue>
    </source>
</reference>
<reference key="5">
    <citation type="journal article" date="2003" name="Genome Res.">
        <title>The secreted protein discovery initiative (SPDI), a large-scale effort to identify novel human secreted and transmembrane proteins: a bioinformatics assessment.</title>
        <authorList>
            <person name="Clark H.F."/>
            <person name="Gurney A.L."/>
            <person name="Abaya E."/>
            <person name="Baker K."/>
            <person name="Baldwin D.T."/>
            <person name="Brush J."/>
            <person name="Chen J."/>
            <person name="Chow B."/>
            <person name="Chui C."/>
            <person name="Crowley C."/>
            <person name="Currell B."/>
            <person name="Deuel B."/>
            <person name="Dowd P."/>
            <person name="Eaton D."/>
            <person name="Foster J.S."/>
            <person name="Grimaldi C."/>
            <person name="Gu Q."/>
            <person name="Hass P.E."/>
            <person name="Heldens S."/>
            <person name="Huang A."/>
            <person name="Kim H.S."/>
            <person name="Klimowski L."/>
            <person name="Jin Y."/>
            <person name="Johnson S."/>
            <person name="Lee J."/>
            <person name="Lewis L."/>
            <person name="Liao D."/>
            <person name="Mark M.R."/>
            <person name="Robbie E."/>
            <person name="Sanchez C."/>
            <person name="Schoenfeld J."/>
            <person name="Seshagiri S."/>
            <person name="Simmons L."/>
            <person name="Singh J."/>
            <person name="Smith V."/>
            <person name="Stinson J."/>
            <person name="Vagts A."/>
            <person name="Vandlen R.L."/>
            <person name="Watanabe C."/>
            <person name="Wieand D."/>
            <person name="Woods K."/>
            <person name="Xie M.-H."/>
            <person name="Yansura D.G."/>
            <person name="Yi S."/>
            <person name="Yu G."/>
            <person name="Yuan J."/>
            <person name="Zhang M."/>
            <person name="Zhang Z."/>
            <person name="Goddard A.D."/>
            <person name="Wood W.I."/>
            <person name="Godowski P.J."/>
            <person name="Gray A.M."/>
        </authorList>
    </citation>
    <scope>NUCLEOTIDE SEQUENCE [LARGE SCALE MRNA] (ISOFORM ALPHA-7X1B)</scope>
    <scope>VARIANT HIS-695</scope>
</reference>
<reference key="6">
    <citation type="journal article" date="2004" name="Nat. Genet.">
        <title>Complete sequencing and characterization of 21,243 full-length human cDNAs.</title>
        <authorList>
            <person name="Ota T."/>
            <person name="Suzuki Y."/>
            <person name="Nishikawa T."/>
            <person name="Otsuki T."/>
            <person name="Sugiyama T."/>
            <person name="Irie R."/>
            <person name="Wakamatsu A."/>
            <person name="Hayashi K."/>
            <person name="Sato H."/>
            <person name="Nagai K."/>
            <person name="Kimura K."/>
            <person name="Makita H."/>
            <person name="Sekine M."/>
            <person name="Obayashi M."/>
            <person name="Nishi T."/>
            <person name="Shibahara T."/>
            <person name="Tanaka T."/>
            <person name="Ishii S."/>
            <person name="Yamamoto J."/>
            <person name="Saito K."/>
            <person name="Kawai Y."/>
            <person name="Isono Y."/>
            <person name="Nakamura Y."/>
            <person name="Nagahari K."/>
            <person name="Murakami K."/>
            <person name="Yasuda T."/>
            <person name="Iwayanagi T."/>
            <person name="Wagatsuma M."/>
            <person name="Shiratori A."/>
            <person name="Sudo H."/>
            <person name="Hosoiri T."/>
            <person name="Kaku Y."/>
            <person name="Kodaira H."/>
            <person name="Kondo H."/>
            <person name="Sugawara M."/>
            <person name="Takahashi M."/>
            <person name="Kanda K."/>
            <person name="Yokoi T."/>
            <person name="Furuya T."/>
            <person name="Kikkawa E."/>
            <person name="Omura Y."/>
            <person name="Abe K."/>
            <person name="Kamihara K."/>
            <person name="Katsuta N."/>
            <person name="Sato K."/>
            <person name="Tanikawa M."/>
            <person name="Yamazaki M."/>
            <person name="Ninomiya K."/>
            <person name="Ishibashi T."/>
            <person name="Yamashita H."/>
            <person name="Murakawa K."/>
            <person name="Fujimori K."/>
            <person name="Tanai H."/>
            <person name="Kimata M."/>
            <person name="Watanabe M."/>
            <person name="Hiraoka S."/>
            <person name="Chiba Y."/>
            <person name="Ishida S."/>
            <person name="Ono Y."/>
            <person name="Takiguchi S."/>
            <person name="Watanabe S."/>
            <person name="Yosida M."/>
            <person name="Hotuta T."/>
            <person name="Kusano J."/>
            <person name="Kanehori K."/>
            <person name="Takahashi-Fujii A."/>
            <person name="Hara H."/>
            <person name="Tanase T.-O."/>
            <person name="Nomura Y."/>
            <person name="Togiya S."/>
            <person name="Komai F."/>
            <person name="Hara R."/>
            <person name="Takeuchi K."/>
            <person name="Arita M."/>
            <person name="Imose N."/>
            <person name="Musashino K."/>
            <person name="Yuuki H."/>
            <person name="Oshima A."/>
            <person name="Sasaki N."/>
            <person name="Aotsuka S."/>
            <person name="Yoshikawa Y."/>
            <person name="Matsunawa H."/>
            <person name="Ichihara T."/>
            <person name="Shiohata N."/>
            <person name="Sano S."/>
            <person name="Moriya S."/>
            <person name="Momiyama H."/>
            <person name="Satoh N."/>
            <person name="Takami S."/>
            <person name="Terashima Y."/>
            <person name="Suzuki O."/>
            <person name="Nakagawa S."/>
            <person name="Senoh A."/>
            <person name="Mizoguchi H."/>
            <person name="Goto Y."/>
            <person name="Shimizu F."/>
            <person name="Wakebe H."/>
            <person name="Hishigaki H."/>
            <person name="Watanabe T."/>
            <person name="Sugiyama A."/>
            <person name="Takemoto M."/>
            <person name="Kawakami B."/>
            <person name="Yamazaki M."/>
            <person name="Watanabe K."/>
            <person name="Kumagai A."/>
            <person name="Itakura S."/>
            <person name="Fukuzumi Y."/>
            <person name="Fujimori Y."/>
            <person name="Komiyama M."/>
            <person name="Tashiro H."/>
            <person name="Tanigami A."/>
            <person name="Fujiwara T."/>
            <person name="Ono T."/>
            <person name="Yamada K."/>
            <person name="Fujii Y."/>
            <person name="Ozaki K."/>
            <person name="Hirao M."/>
            <person name="Ohmori Y."/>
            <person name="Kawabata A."/>
            <person name="Hikiji T."/>
            <person name="Kobatake N."/>
            <person name="Inagaki H."/>
            <person name="Ikema Y."/>
            <person name="Okamoto S."/>
            <person name="Okitani R."/>
            <person name="Kawakami T."/>
            <person name="Noguchi S."/>
            <person name="Itoh T."/>
            <person name="Shigeta K."/>
            <person name="Senba T."/>
            <person name="Matsumura K."/>
            <person name="Nakajima Y."/>
            <person name="Mizuno T."/>
            <person name="Morinaga M."/>
            <person name="Sasaki M."/>
            <person name="Togashi T."/>
            <person name="Oyama M."/>
            <person name="Hata H."/>
            <person name="Watanabe M."/>
            <person name="Komatsu T."/>
            <person name="Mizushima-Sugano J."/>
            <person name="Satoh T."/>
            <person name="Shirai Y."/>
            <person name="Takahashi Y."/>
            <person name="Nakagawa K."/>
            <person name="Okumura K."/>
            <person name="Nagase T."/>
            <person name="Nomura N."/>
            <person name="Kikuchi H."/>
            <person name="Masuho Y."/>
            <person name="Yamashita R."/>
            <person name="Nakai K."/>
            <person name="Yada T."/>
            <person name="Nakamura Y."/>
            <person name="Ohara O."/>
            <person name="Isogai T."/>
            <person name="Sugano S."/>
        </authorList>
    </citation>
    <scope>NUCLEOTIDE SEQUENCE [LARGE SCALE MRNA] (ISOFORM 2)</scope>
    <scope>VARIANT HIS-695</scope>
    <source>
        <tissue>Uterus</tissue>
    </source>
</reference>
<reference key="7">
    <citation type="journal article" date="2006" name="Nature">
        <title>The finished DNA sequence of human chromosome 12.</title>
        <authorList>
            <person name="Scherer S.E."/>
            <person name="Muzny D.M."/>
            <person name="Buhay C.J."/>
            <person name="Chen R."/>
            <person name="Cree A."/>
            <person name="Ding Y."/>
            <person name="Dugan-Rocha S."/>
            <person name="Gill R."/>
            <person name="Gunaratne P."/>
            <person name="Harris R.A."/>
            <person name="Hawes A.C."/>
            <person name="Hernandez J."/>
            <person name="Hodgson A.V."/>
            <person name="Hume J."/>
            <person name="Jackson A."/>
            <person name="Khan Z.M."/>
            <person name="Kovar-Smith C."/>
            <person name="Lewis L.R."/>
            <person name="Lozado R.J."/>
            <person name="Metzker M.L."/>
            <person name="Milosavljevic A."/>
            <person name="Miner G.R."/>
            <person name="Montgomery K.T."/>
            <person name="Morgan M.B."/>
            <person name="Nazareth L.V."/>
            <person name="Scott G."/>
            <person name="Sodergren E."/>
            <person name="Song X.-Z."/>
            <person name="Steffen D."/>
            <person name="Lovering R.C."/>
            <person name="Wheeler D.A."/>
            <person name="Worley K.C."/>
            <person name="Yuan Y."/>
            <person name="Zhang Z."/>
            <person name="Adams C.Q."/>
            <person name="Ansari-Lari M.A."/>
            <person name="Ayele M."/>
            <person name="Brown M.J."/>
            <person name="Chen G."/>
            <person name="Chen Z."/>
            <person name="Clerc-Blankenburg K.P."/>
            <person name="Davis C."/>
            <person name="Delgado O."/>
            <person name="Dinh H.H."/>
            <person name="Draper H."/>
            <person name="Gonzalez-Garay M.L."/>
            <person name="Havlak P."/>
            <person name="Jackson L.R."/>
            <person name="Jacob L.S."/>
            <person name="Kelly S.H."/>
            <person name="Li L."/>
            <person name="Li Z."/>
            <person name="Liu J."/>
            <person name="Liu W."/>
            <person name="Lu J."/>
            <person name="Maheshwari M."/>
            <person name="Nguyen B.-V."/>
            <person name="Okwuonu G.O."/>
            <person name="Pasternak S."/>
            <person name="Perez L.M."/>
            <person name="Plopper F.J.H."/>
            <person name="Santibanez J."/>
            <person name="Shen H."/>
            <person name="Tabor P.E."/>
            <person name="Verduzco D."/>
            <person name="Waldron L."/>
            <person name="Wang Q."/>
            <person name="Williams G.A."/>
            <person name="Zhang J."/>
            <person name="Zhou J."/>
            <person name="Allen C.C."/>
            <person name="Amin A.G."/>
            <person name="Anyalebechi V."/>
            <person name="Bailey M."/>
            <person name="Barbaria J.A."/>
            <person name="Bimage K.E."/>
            <person name="Bryant N.P."/>
            <person name="Burch P.E."/>
            <person name="Burkett C.E."/>
            <person name="Burrell K.L."/>
            <person name="Calderon E."/>
            <person name="Cardenas V."/>
            <person name="Carter K."/>
            <person name="Casias K."/>
            <person name="Cavazos I."/>
            <person name="Cavazos S.R."/>
            <person name="Ceasar H."/>
            <person name="Chacko J."/>
            <person name="Chan S.N."/>
            <person name="Chavez D."/>
            <person name="Christopoulos C."/>
            <person name="Chu J."/>
            <person name="Cockrell R."/>
            <person name="Cox C.D."/>
            <person name="Dang M."/>
            <person name="Dathorne S.R."/>
            <person name="David R."/>
            <person name="Davis C.M."/>
            <person name="Davy-Carroll L."/>
            <person name="Deshazo D.R."/>
            <person name="Donlin J.E."/>
            <person name="D'Souza L."/>
            <person name="Eaves K.A."/>
            <person name="Egan A."/>
            <person name="Emery-Cohen A.J."/>
            <person name="Escotto M."/>
            <person name="Flagg N."/>
            <person name="Forbes L.D."/>
            <person name="Gabisi A.M."/>
            <person name="Garza M."/>
            <person name="Hamilton C."/>
            <person name="Henderson N."/>
            <person name="Hernandez O."/>
            <person name="Hines S."/>
            <person name="Hogues M.E."/>
            <person name="Huang M."/>
            <person name="Idlebird D.G."/>
            <person name="Johnson R."/>
            <person name="Jolivet A."/>
            <person name="Jones S."/>
            <person name="Kagan R."/>
            <person name="King L.M."/>
            <person name="Leal B."/>
            <person name="Lebow H."/>
            <person name="Lee S."/>
            <person name="LeVan J.M."/>
            <person name="Lewis L.C."/>
            <person name="London P."/>
            <person name="Lorensuhewa L.M."/>
            <person name="Loulseged H."/>
            <person name="Lovett D.A."/>
            <person name="Lucier A."/>
            <person name="Lucier R.L."/>
            <person name="Ma J."/>
            <person name="Madu R.C."/>
            <person name="Mapua P."/>
            <person name="Martindale A.D."/>
            <person name="Martinez E."/>
            <person name="Massey E."/>
            <person name="Mawhiney S."/>
            <person name="Meador M.G."/>
            <person name="Mendez S."/>
            <person name="Mercado C."/>
            <person name="Mercado I.C."/>
            <person name="Merritt C.E."/>
            <person name="Miner Z.L."/>
            <person name="Minja E."/>
            <person name="Mitchell T."/>
            <person name="Mohabbat F."/>
            <person name="Mohabbat K."/>
            <person name="Montgomery B."/>
            <person name="Moore N."/>
            <person name="Morris S."/>
            <person name="Munidasa M."/>
            <person name="Ngo R.N."/>
            <person name="Nguyen N.B."/>
            <person name="Nickerson E."/>
            <person name="Nwaokelemeh O.O."/>
            <person name="Nwokenkwo S."/>
            <person name="Obregon M."/>
            <person name="Oguh M."/>
            <person name="Oragunye N."/>
            <person name="Oviedo R.J."/>
            <person name="Parish B.J."/>
            <person name="Parker D.N."/>
            <person name="Parrish J."/>
            <person name="Parks K.L."/>
            <person name="Paul H.A."/>
            <person name="Payton B.A."/>
            <person name="Perez A."/>
            <person name="Perrin W."/>
            <person name="Pickens A."/>
            <person name="Primus E.L."/>
            <person name="Pu L.-L."/>
            <person name="Puazo M."/>
            <person name="Quiles M.M."/>
            <person name="Quiroz J.B."/>
            <person name="Rabata D."/>
            <person name="Reeves K."/>
            <person name="Ruiz S.J."/>
            <person name="Shao H."/>
            <person name="Sisson I."/>
            <person name="Sonaike T."/>
            <person name="Sorelle R.P."/>
            <person name="Sutton A.E."/>
            <person name="Svatek A.F."/>
            <person name="Svetz L.A."/>
            <person name="Tamerisa K.S."/>
            <person name="Taylor T.R."/>
            <person name="Teague B."/>
            <person name="Thomas N."/>
            <person name="Thorn R.D."/>
            <person name="Trejos Z.Y."/>
            <person name="Trevino B.K."/>
            <person name="Ukegbu O.N."/>
            <person name="Urban J.B."/>
            <person name="Vasquez L.I."/>
            <person name="Vera V.A."/>
            <person name="Villasana D.M."/>
            <person name="Wang L."/>
            <person name="Ward-Moore S."/>
            <person name="Warren J.T."/>
            <person name="Wei X."/>
            <person name="White F."/>
            <person name="Williamson A.L."/>
            <person name="Wleczyk R."/>
            <person name="Wooden H.S."/>
            <person name="Wooden S.H."/>
            <person name="Yen J."/>
            <person name="Yoon L."/>
            <person name="Yoon V."/>
            <person name="Zorrilla S.E."/>
            <person name="Nelson D."/>
            <person name="Kucherlapati R."/>
            <person name="Weinstock G."/>
            <person name="Gibbs R.A."/>
        </authorList>
    </citation>
    <scope>NUCLEOTIDE SEQUENCE [LARGE SCALE GENOMIC DNA]</scope>
</reference>
<reference key="8">
    <citation type="journal article" date="2004" name="Genome Res.">
        <title>The status, quality, and expansion of the NIH full-length cDNA project: the Mammalian Gene Collection (MGC).</title>
        <authorList>
            <consortium name="The MGC Project Team"/>
        </authorList>
    </citation>
    <scope>NUCLEOTIDE SEQUENCE [LARGE SCALE MRNA] (ISOFORM ALPHA-7X2B)</scope>
    <scope>VARIANTS VAL-457; MET-506; HIS-586 AND VAL-696</scope>
    <source>
        <tissue>Brain</tissue>
    </source>
</reference>
<reference key="9">
    <citation type="journal article" date="1993" name="J. Cell Sci.">
        <title>Expression of alpha 7 integrin cytoplasmic domains during skeletal muscle development: alternate forms, conformational change, and homologies with serine/threonine kinases and tyrosine phosphatases.</title>
        <authorList>
            <person name="Song W.K."/>
            <person name="Wang W."/>
            <person name="Sato H."/>
            <person name="Bielser D.A."/>
            <person name="Kaufman S.J."/>
        </authorList>
    </citation>
    <scope>NUCLEOTIDE SEQUENCE [MRNA] OF 1105-1181 (ISOFORMS ALPHA-7X1B/ALPHA-7X2B/ALPHA-7X2DB/ALPHA-7X1X2B/2)</scope>
    <source>
        <tissue>Fetal muscle</tissue>
    </source>
</reference>
<reference key="10">
    <citation type="journal article" date="1997" name="Gastroenterology">
        <title>Relation between integrin alpha7Bbeta1 expression in human intestinal cells and enterocytic differentiation.</title>
        <authorList>
            <person name="Basora N."/>
            <person name="Vachon P.H."/>
            <person name="Herring-Gillam F.E."/>
            <person name="Perreault N."/>
            <person name="Beaulieu J.-F."/>
        </authorList>
    </citation>
    <scope>NUCLEOTIDE SEQUENCE [MRNA] OF 1105-1181 (ISOFORMS ALPHA-7X1X2B AND ALPHA-7X1X2A)</scope>
    <source>
        <tissue>Skeletal muscle</tissue>
    </source>
</reference>
<reference key="11">
    <citation type="journal article" date="1991" name="Cell Regul.">
        <title>Laminin-binding integrin alpha 7 beta 1: functional characterization and expression in normal and malignant melanocytes.</title>
        <authorList>
            <person name="Kramer R.H."/>
            <person name="Vu M.P."/>
            <person name="Cheng Y.F."/>
            <person name="Ramos D.M."/>
            <person name="Timpl R."/>
            <person name="Waleh N."/>
        </authorList>
    </citation>
    <scope>PROTEIN SEQUENCE OF 34-45</scope>
    <source>
        <tissue>Melanoma</tissue>
    </source>
</reference>
<reference key="12">
    <citation type="journal article" date="2004" name="Protein Sci.">
        <title>Signal peptide prediction based on analysis of experimentally verified cleavage sites.</title>
        <authorList>
            <person name="Zhang Z."/>
            <person name="Henzel W.J."/>
        </authorList>
    </citation>
    <scope>PROTEIN SEQUENCE OF 34-48</scope>
</reference>
<reference key="13">
    <citation type="journal article" date="1997" name="Mol. Biol. Cell">
        <title>The laminin-binding activity of the alpha 7 integrin receptor is defined by developmentally regulated splicing in the extracellular domain.</title>
        <authorList>
            <person name="Ziober B.L."/>
            <person name="Chen Y.Q."/>
            <person name="Kramer R.H."/>
        </authorList>
    </citation>
    <scope>FUNCTION</scope>
</reference>
<reference key="14">
    <citation type="journal article" date="2000" name="Exp. Cell Res.">
        <title>The role of extracellular and cytoplasmic splice domains of alpha7-integrin in cell adhesion and migration on laminins.</title>
        <authorList>
            <person name="Schoeber S."/>
            <person name="Mielenz D."/>
            <person name="Echtermeyer F."/>
            <person name="Hapke S."/>
            <person name="Poeschl E."/>
            <person name="von der Mark H."/>
            <person name="Moch H."/>
            <person name="von der Mark K."/>
        </authorList>
    </citation>
    <scope>FUNCTION</scope>
</reference>
<reference key="15">
    <citation type="journal article" date="1996" name="Dev. Biol.">
        <title>Synaptic integrins in developing, adult, and mutant muscle: selective association of alpha1, alpha7A, and alpha7B integrins with the neuromuscular junction.</title>
        <authorList>
            <person name="Martin P.T."/>
            <person name="Kaufman S.J."/>
            <person name="Kramer R.H."/>
            <person name="Sanes J.R."/>
        </authorList>
    </citation>
    <scope>TISSUE SPECIFICITY</scope>
</reference>
<reference key="16">
    <citation type="journal article" date="2007" name="Am. J. Respir. Cell Mol. Biol.">
        <title>Laminin-binding integrin alpha7 is required for contractile phenotype expression by human airway myocytes.</title>
        <authorList>
            <person name="Tran T."/>
            <person name="Ens-Blackie K."/>
            <person name="Rector E.S."/>
            <person name="Stelmack G.L."/>
            <person name="McNeill K.D."/>
            <person name="Tarone G."/>
            <person name="Gerthoffer W.T."/>
            <person name="Unruh H."/>
            <person name="Halayko A.J."/>
        </authorList>
    </citation>
    <scope>FUNCTION</scope>
</reference>
<reference key="17">
    <citation type="journal article" date="2008" name="J. Biol. Chem.">
        <title>Genetically determined proteolytic cleavage modulates alpha7beta1 integrin function.</title>
        <authorList>
            <person name="Liu J."/>
            <person name="Gurpur P.B."/>
            <person name="Kaufman S.J."/>
        </authorList>
    </citation>
    <scope>CLEAVAGE BY UROKINASE</scope>
</reference>
<reference key="18">
    <citation type="journal article" date="2009" name="J. Proteome Res.">
        <title>Glycoproteomics analysis of human liver tissue by combination of multiple enzyme digestion and hydrazide chemistry.</title>
        <authorList>
            <person name="Chen R."/>
            <person name="Jiang X."/>
            <person name="Sun D."/>
            <person name="Han G."/>
            <person name="Wang F."/>
            <person name="Ye M."/>
            <person name="Wang L."/>
            <person name="Zou H."/>
        </authorList>
    </citation>
    <scope>GLYCOSYLATION [LARGE SCALE ANALYSIS] AT ASN-1025</scope>
    <source>
        <tissue>Liver</tissue>
    </source>
</reference>
<reference key="19">
    <citation type="journal article" date="2012" name="Biochem. Cell Biol.">
        <title>Biophysical and structural studies of the human calcium- and integrin-binding protein family: understanding their functional similarities and differences.</title>
        <authorList>
            <person name="Huang H."/>
            <person name="Bogstie J.N."/>
            <person name="Vogel H.J."/>
        </authorList>
    </citation>
    <scope>INTERACTION WITH CIB1</scope>
</reference>
<comment type="function">
    <text evidence="1 7 12 18">Integrin alpha-7/beta-1 is the primary laminin receptor on skeletal myoblasts and adult myofibers. During myogenic differentiation, it may induce changes in the shape and mobility of myoblasts, and facilitate their localization at laminin-rich sites of secondary fiber formation. It is involved in the maintenance of the myofibers cytoarchitecture as well as for their anchorage, viability and functional integrity. Isoform Alpha-7X2B and isoform Alpha-7X1B promote myoblast migration on laminin 1 and laminin 2/4, but isoform Alpha-7X1B is less active on laminin 1 (In vitro). Acts as a Schwann cell receptor for laminin-2. Acts as a receptor of COMP and mediates its effect on vascular smooth muscle cells (VSMCs) maturation (By similarity). Required to promote contractile phenotype acquisition in differentiated airway smooth muscle (ASM) cells.</text>
</comment>
<comment type="subunit">
    <text evidence="1 16">Heterodimer of an alpha and a beta subunit. The alpha subunit is composed of a heavy and a light chain linked by a disulfide bond. Alpha-7 associates with beta-1. Interacts with COMP (By similarity). Interacts (via C-terminus intracellular tail region) with CIB1; the interaction is stabilized/increased in a calcium- and magnesium-dependent manner.</text>
</comment>
<comment type="subcellular location">
    <subcellularLocation>
        <location>Membrane</location>
        <topology>Single-pass type I membrane protein</topology>
    </subcellularLocation>
</comment>
<comment type="alternative products">
    <event type="alternative splicing"/>
    <isoform>
        <id>Q13683-1</id>
        <name>Alpha-7X1X2B</name>
        <sequence type="displayed"/>
    </isoform>
    <isoform>
        <id>Q13683-3</id>
        <name>Alpha-7X1B</name>
        <sequence type="described" ref="VSP_002728"/>
    </isoform>
    <isoform>
        <id>Q13683-7</id>
        <name>Alpha-7X2B</name>
        <sequence type="described" ref="VSP_002727"/>
    </isoform>
    <isoform>
        <id>Q13683-9</id>
        <name>Alpha-7X2DB</name>
        <sequence type="described" ref="VSP_042364"/>
    </isoform>
    <isoform>
        <id>Q13683-10</id>
        <name>Alpha-7X1X2A</name>
        <sequence type="described" ref="VSP_002730"/>
    </isoform>
    <isoform>
        <id>Q13683-13</id>
        <name>2</name>
        <sequence type="described" ref="VSP_040487 VSP_040488 VSP_002728"/>
    </isoform>
    <text>Additional isoforms seem to exist. There is a combination of at least five alternatively spliced domains, three extracellular (X1, X2 and D) and two cytoplasmic (A and B). A third potential alternatively spliced cytoplasmic domain (C) does not appear to be expressed.</text>
</comment>
<comment type="tissue specificity">
    <text evidence="17">Isoforms containing segment A are predominantly expressed in skeletal muscle. Isoforms containing segment B are abundantly expressed in skeletal muscle, moderately in cardiac muscle, small intestine, colon, ovary and prostate and weakly in lung and testes. Isoforms containing segment X2D are expressed at low levels in fetal and adult skeletal muscle and in cardiac muscle, but are not detected in myoblasts and myotubes. In muscle fibers isoforms containing segment A and B are expressed at myotendinous and neuromuscular junctions; isoforms containing segment C are expressed at neuromuscular junctions and at extrasynaptic sites. Isoforms containing segments X1 or X2 or, at low levels, X1X2 are expressed in fetal and adult skeletal muscle (myoblasts and myotubes) and cardiac muscle.</text>
</comment>
<comment type="developmental stage">
    <text>In renewing intestinal epithelium, expression of isoforms containing segment B correlates with the onset of enterocytic differentiation.</text>
</comment>
<comment type="PTM">
    <text evidence="1">ADP-ribosylated on at least two sites of the extracellular domain in skeletal myotubes.</text>
</comment>
<comment type="PTM">
    <text evidence="14">A 70 kDa form is created by proteolytic cleavage. Cleavage is elevated during myogenic differentiation and the cleaved form enhances cell adhesion and spreading on laminin.</text>
</comment>
<comment type="disease" evidence="20">
    <disease id="DI-02701">
        <name>Muscular dystrophy congenital due to integrin alpha-7 deficiency</name>
        <acronym>MDCI</acronym>
        <description>A form of congenital muscular dystrophy. Patients present at birth, or within the first few months of life, with hypotonia, muscle weakness and often with joint contractures.</description>
        <dbReference type="MIM" id="613204"/>
    </disease>
    <text>The disease is caused by variants affecting the gene represented in this entry.</text>
</comment>
<comment type="similarity">
    <text evidence="29">Belongs to the integrin alpha chain family.</text>
</comment>
<accession>Q13683</accession>
<accession>B4E3U0</accession>
<accession>C9JMD3</accession>
<accession>C9JMZ6</accession>
<accession>O43197</accession>
<accession>Q86W93</accession>
<accession>Q9NY89</accession>
<accession>Q9UET0</accession>
<accession>Q9UEV2</accession>
<name>ITA7_HUMAN</name>